<accession>Q49SQ2</accession>
<organism>
    <name type="scientific">Pan paniscus</name>
    <name type="common">Pygmy chimpanzee</name>
    <name type="synonym">Bonobo</name>
    <dbReference type="NCBI Taxonomy" id="9597"/>
    <lineage>
        <taxon>Eukaryota</taxon>
        <taxon>Metazoa</taxon>
        <taxon>Chordata</taxon>
        <taxon>Craniata</taxon>
        <taxon>Vertebrata</taxon>
        <taxon>Euteleostomi</taxon>
        <taxon>Mammalia</taxon>
        <taxon>Eutheria</taxon>
        <taxon>Euarchontoglires</taxon>
        <taxon>Primates</taxon>
        <taxon>Haplorrhini</taxon>
        <taxon>Catarrhini</taxon>
        <taxon>Hominidae</taxon>
        <taxon>Pan</taxon>
    </lineage>
</organism>
<proteinExistence type="inferred from homology"/>
<comment type="function">
    <text>Orphan receptor; could be a chemoattractant receptor.</text>
</comment>
<comment type="subcellular location">
    <subcellularLocation>
        <location>Cell membrane</location>
        <topology>Multi-pass membrane protein</topology>
    </subcellularLocation>
</comment>
<comment type="similarity">
    <text evidence="2">Belongs to the G-protein coupled receptor 1 family.</text>
</comment>
<protein>
    <recommendedName>
        <fullName>Probable G-protein coupled receptor 33</fullName>
    </recommendedName>
</protein>
<keyword id="KW-1003">Cell membrane</keyword>
<keyword id="KW-1015">Disulfide bond</keyword>
<keyword id="KW-0297">G-protein coupled receptor</keyword>
<keyword id="KW-0325">Glycoprotein</keyword>
<keyword id="KW-0472">Membrane</keyword>
<keyword id="KW-0675">Receptor</keyword>
<keyword id="KW-1185">Reference proteome</keyword>
<keyword id="KW-0807">Transducer</keyword>
<keyword id="KW-0812">Transmembrane</keyword>
<keyword id="KW-1133">Transmembrane helix</keyword>
<evidence type="ECO:0000255" key="1"/>
<evidence type="ECO:0000255" key="2">
    <source>
        <dbReference type="PROSITE-ProRule" id="PRU00521"/>
    </source>
</evidence>
<name>GPR33_PANPA</name>
<sequence>MDLINSTDYLINASTLVRNSTQFLAPASKMIIALSLYISSIIGTITNGLYLWVLRFKMKQTVNTLLFFHLILSYFISTMILPFMATSQLQDNHWNFGTALCKVFNGTLSLGMFTSVFFLSAIGLDRYLLTLHPVWSQQHRTPRWASSIVLGVWISAAALSIPYLIFRQTHHDRKGKVTCQNNYAVSTNWESKEMQALRQWIHVACFISRFLLGFLLPFFIIIFCYERVASKVKERSLFKSSKPFKVMMTAIISFFVCWMPYHIHQGLLLTMNQSLLLELTLILTVLTTSFNTIFSPTLYLFVGENFKKVFKKSILALFESTFSEDSSVERTQT</sequence>
<reference key="1">
    <citation type="journal article" date="2005" name="J. Biol. Chem.">
        <title>The rise and fall of the chemoattractant receptor GPR33.</title>
        <authorList>
            <person name="Roempler H."/>
            <person name="Schulz A."/>
            <person name="Pitra C."/>
            <person name="Coop G."/>
            <person name="Przeworski M."/>
            <person name="Paeaebo S."/>
            <person name="Schoeneberg T."/>
        </authorList>
    </citation>
    <scope>NUCLEOTIDE SEQUENCE [GENOMIC DNA]</scope>
</reference>
<feature type="chain" id="PRO_0000069555" description="Probable G-protein coupled receptor 33">
    <location>
        <begin position="1"/>
        <end position="333"/>
    </location>
</feature>
<feature type="topological domain" description="Extracellular" evidence="1">
    <location>
        <begin position="1"/>
        <end position="30"/>
    </location>
</feature>
<feature type="transmembrane region" description="Helical; Name=1" evidence="1">
    <location>
        <begin position="31"/>
        <end position="53"/>
    </location>
</feature>
<feature type="topological domain" description="Cytoplasmic" evidence="1">
    <location>
        <begin position="54"/>
        <end position="64"/>
    </location>
</feature>
<feature type="transmembrane region" description="Helical; Name=2" evidence="1">
    <location>
        <begin position="65"/>
        <end position="86"/>
    </location>
</feature>
<feature type="topological domain" description="Extracellular" evidence="1">
    <location>
        <begin position="87"/>
        <end position="103"/>
    </location>
</feature>
<feature type="transmembrane region" description="Helical; Name=3" evidence="1">
    <location>
        <begin position="104"/>
        <end position="124"/>
    </location>
</feature>
<feature type="topological domain" description="Cytoplasmic" evidence="1">
    <location>
        <begin position="125"/>
        <end position="143"/>
    </location>
</feature>
<feature type="transmembrane region" description="Helical; Name=4" evidence="1">
    <location>
        <begin position="144"/>
        <end position="165"/>
    </location>
</feature>
<feature type="topological domain" description="Extracellular" evidence="1">
    <location>
        <begin position="166"/>
        <end position="209"/>
    </location>
</feature>
<feature type="transmembrane region" description="Helical; Name=5" evidence="1">
    <location>
        <begin position="210"/>
        <end position="230"/>
    </location>
</feature>
<feature type="topological domain" description="Cytoplasmic" evidence="1">
    <location>
        <begin position="231"/>
        <end position="246"/>
    </location>
</feature>
<feature type="transmembrane region" description="Helical; Name=6" evidence="1">
    <location>
        <begin position="247"/>
        <end position="268"/>
    </location>
</feature>
<feature type="topological domain" description="Extracellular" evidence="1">
    <location>
        <begin position="269"/>
        <end position="283"/>
    </location>
</feature>
<feature type="transmembrane region" description="Helical; Name=7" evidence="1">
    <location>
        <begin position="284"/>
        <end position="303"/>
    </location>
</feature>
<feature type="topological domain" description="Cytoplasmic" evidence="1">
    <location>
        <begin position="304"/>
        <end position="333"/>
    </location>
</feature>
<feature type="glycosylation site" description="N-linked (GlcNAc...) asparagine" evidence="1">
    <location>
        <position position="5"/>
    </location>
</feature>
<feature type="glycosylation site" description="N-linked (GlcNAc...) asparagine" evidence="1">
    <location>
        <position position="12"/>
    </location>
</feature>
<feature type="glycosylation site" description="N-linked (GlcNAc...) asparagine" evidence="1">
    <location>
        <position position="19"/>
    </location>
</feature>
<feature type="glycosylation site" description="N-linked (GlcNAc...) asparagine" evidence="1">
    <location>
        <position position="272"/>
    </location>
</feature>
<feature type="disulfide bond" evidence="2">
    <location>
        <begin position="101"/>
        <end position="179"/>
    </location>
</feature>
<gene>
    <name type="primary">GPR33</name>
</gene>
<dbReference type="EMBL" id="AY493997">
    <property type="protein sequence ID" value="AAR98753.1"/>
    <property type="molecule type" value="Genomic_DNA"/>
</dbReference>
<dbReference type="RefSeq" id="XP_003821251.1">
    <property type="nucleotide sequence ID" value="XM_003821203.4"/>
</dbReference>
<dbReference type="SMR" id="Q49SQ2"/>
<dbReference type="STRING" id="9597.ENSPPAP00000003956"/>
<dbReference type="GlyCosmos" id="Q49SQ2">
    <property type="glycosylation" value="4 sites, No reported glycans"/>
</dbReference>
<dbReference type="Ensembl" id="ENSPPAT00000018347.1">
    <property type="protein sequence ID" value="ENSPPAP00000003956.1"/>
    <property type="gene ID" value="ENSPPAG00000016765.1"/>
</dbReference>
<dbReference type="GeneID" id="100993020"/>
<dbReference type="KEGG" id="pps:100993020"/>
<dbReference type="CTD" id="2856"/>
<dbReference type="eggNOG" id="KOG3656">
    <property type="taxonomic scope" value="Eukaryota"/>
</dbReference>
<dbReference type="GeneTree" id="ENSGT01020000230438"/>
<dbReference type="OMA" id="QHRTPRW"/>
<dbReference type="OrthoDB" id="12704at9604"/>
<dbReference type="Proteomes" id="UP000240080">
    <property type="component" value="Chromosome 14"/>
</dbReference>
<dbReference type="GO" id="GO:0005886">
    <property type="term" value="C:plasma membrane"/>
    <property type="evidence" value="ECO:0007669"/>
    <property type="project" value="UniProtKB-SubCell"/>
</dbReference>
<dbReference type="GO" id="GO:0004875">
    <property type="term" value="F:complement receptor activity"/>
    <property type="evidence" value="ECO:0007669"/>
    <property type="project" value="TreeGrafter"/>
</dbReference>
<dbReference type="GO" id="GO:0004930">
    <property type="term" value="F:G protein-coupled receptor activity"/>
    <property type="evidence" value="ECO:0007669"/>
    <property type="project" value="UniProtKB-KW"/>
</dbReference>
<dbReference type="GO" id="GO:0006954">
    <property type="term" value="P:inflammatory response"/>
    <property type="evidence" value="ECO:0007669"/>
    <property type="project" value="TreeGrafter"/>
</dbReference>
<dbReference type="GO" id="GO:0007200">
    <property type="term" value="P:phospholipase C-activating G protein-coupled receptor signaling pathway"/>
    <property type="evidence" value="ECO:0007669"/>
    <property type="project" value="TreeGrafter"/>
</dbReference>
<dbReference type="GO" id="GO:0007204">
    <property type="term" value="P:positive regulation of cytosolic calcium ion concentration"/>
    <property type="evidence" value="ECO:0007669"/>
    <property type="project" value="TreeGrafter"/>
</dbReference>
<dbReference type="CDD" id="cd15120">
    <property type="entry name" value="7tmA_GPR33"/>
    <property type="match status" value="1"/>
</dbReference>
<dbReference type="FunFam" id="1.20.1070.10:FF:000034">
    <property type="entry name" value="G-protein coupled receptor 1"/>
    <property type="match status" value="1"/>
</dbReference>
<dbReference type="Gene3D" id="1.20.1070.10">
    <property type="entry name" value="Rhodopsin 7-helix transmembrane proteins"/>
    <property type="match status" value="1"/>
</dbReference>
<dbReference type="InterPro" id="IPR000826">
    <property type="entry name" value="Formyl_rcpt-rel"/>
</dbReference>
<dbReference type="InterPro" id="IPR000276">
    <property type="entry name" value="GPCR_Rhodpsn"/>
</dbReference>
<dbReference type="InterPro" id="IPR017452">
    <property type="entry name" value="GPCR_Rhodpsn_7TM"/>
</dbReference>
<dbReference type="PANTHER" id="PTHR24225">
    <property type="entry name" value="CHEMOTACTIC RECEPTOR"/>
    <property type="match status" value="1"/>
</dbReference>
<dbReference type="PANTHER" id="PTHR24225:SF5">
    <property type="entry name" value="G-PROTEIN COUPLED RECEPTOR 33-RELATED"/>
    <property type="match status" value="1"/>
</dbReference>
<dbReference type="Pfam" id="PF00001">
    <property type="entry name" value="7tm_1"/>
    <property type="match status" value="1"/>
</dbReference>
<dbReference type="PRINTS" id="PR00526">
    <property type="entry name" value="FMETLEUPHER"/>
</dbReference>
<dbReference type="PRINTS" id="PR00237">
    <property type="entry name" value="GPCRRHODOPSN"/>
</dbReference>
<dbReference type="SUPFAM" id="SSF81321">
    <property type="entry name" value="Family A G protein-coupled receptor-like"/>
    <property type="match status" value="1"/>
</dbReference>
<dbReference type="PROSITE" id="PS50262">
    <property type="entry name" value="G_PROTEIN_RECEP_F1_2"/>
    <property type="match status" value="1"/>
</dbReference>